<gene>
    <name evidence="1" type="primary">argC</name>
    <name type="ordered locus">Shewmr4_3709</name>
</gene>
<protein>
    <recommendedName>
        <fullName evidence="1">N-acetyl-gamma-glutamyl-phosphate reductase</fullName>
        <shortName evidence="1">AGPR</shortName>
        <ecNumber evidence="1">1.2.1.38</ecNumber>
    </recommendedName>
    <alternativeName>
        <fullName evidence="1">N-acetyl-glutamate semialdehyde dehydrogenase</fullName>
        <shortName evidence="1">NAGSA dehydrogenase</shortName>
    </alternativeName>
</protein>
<organism>
    <name type="scientific">Shewanella sp. (strain MR-4)</name>
    <dbReference type="NCBI Taxonomy" id="60480"/>
    <lineage>
        <taxon>Bacteria</taxon>
        <taxon>Pseudomonadati</taxon>
        <taxon>Pseudomonadota</taxon>
        <taxon>Gammaproteobacteria</taxon>
        <taxon>Alteromonadales</taxon>
        <taxon>Shewanellaceae</taxon>
        <taxon>Shewanella</taxon>
    </lineage>
</organism>
<reference key="1">
    <citation type="submission" date="2006-08" db="EMBL/GenBank/DDBJ databases">
        <title>Complete sequence of Shewanella sp. MR-4.</title>
        <authorList>
            <consortium name="US DOE Joint Genome Institute"/>
            <person name="Copeland A."/>
            <person name="Lucas S."/>
            <person name="Lapidus A."/>
            <person name="Barry K."/>
            <person name="Detter J.C."/>
            <person name="Glavina del Rio T."/>
            <person name="Hammon N."/>
            <person name="Israni S."/>
            <person name="Dalin E."/>
            <person name="Tice H."/>
            <person name="Pitluck S."/>
            <person name="Kiss H."/>
            <person name="Brettin T."/>
            <person name="Bruce D."/>
            <person name="Han C."/>
            <person name="Tapia R."/>
            <person name="Gilna P."/>
            <person name="Schmutz J."/>
            <person name="Larimer F."/>
            <person name="Land M."/>
            <person name="Hauser L."/>
            <person name="Kyrpides N."/>
            <person name="Mikhailova N."/>
            <person name="Nealson K."/>
            <person name="Konstantinidis K."/>
            <person name="Klappenbach J."/>
            <person name="Tiedje J."/>
            <person name="Richardson P."/>
        </authorList>
    </citation>
    <scope>NUCLEOTIDE SEQUENCE [LARGE SCALE GENOMIC DNA]</scope>
    <source>
        <strain>MR-4</strain>
    </source>
</reference>
<feature type="chain" id="PRO_1000011062" description="N-acetyl-gamma-glutamyl-phosphate reductase">
    <location>
        <begin position="1"/>
        <end position="326"/>
    </location>
</feature>
<feature type="active site" evidence="1">
    <location>
        <position position="155"/>
    </location>
</feature>
<evidence type="ECO:0000255" key="1">
    <source>
        <dbReference type="HAMAP-Rule" id="MF_00150"/>
    </source>
</evidence>
<dbReference type="EC" id="1.2.1.38" evidence="1"/>
<dbReference type="EMBL" id="CP000446">
    <property type="protein sequence ID" value="ABI40772.1"/>
    <property type="molecule type" value="Genomic_DNA"/>
</dbReference>
<dbReference type="RefSeq" id="WP_011624431.1">
    <property type="nucleotide sequence ID" value="NC_008321.1"/>
</dbReference>
<dbReference type="SMR" id="Q0HDU5"/>
<dbReference type="KEGG" id="she:Shewmr4_3709"/>
<dbReference type="HOGENOM" id="CLU_006384_0_1_6"/>
<dbReference type="UniPathway" id="UPA00068">
    <property type="reaction ID" value="UER00108"/>
</dbReference>
<dbReference type="GO" id="GO:0005737">
    <property type="term" value="C:cytoplasm"/>
    <property type="evidence" value="ECO:0007669"/>
    <property type="project" value="UniProtKB-SubCell"/>
</dbReference>
<dbReference type="GO" id="GO:0003942">
    <property type="term" value="F:N-acetyl-gamma-glutamyl-phosphate reductase activity"/>
    <property type="evidence" value="ECO:0007669"/>
    <property type="project" value="UniProtKB-UniRule"/>
</dbReference>
<dbReference type="GO" id="GO:0051287">
    <property type="term" value="F:NAD binding"/>
    <property type="evidence" value="ECO:0007669"/>
    <property type="project" value="InterPro"/>
</dbReference>
<dbReference type="GO" id="GO:0070401">
    <property type="term" value="F:NADP+ binding"/>
    <property type="evidence" value="ECO:0007669"/>
    <property type="project" value="InterPro"/>
</dbReference>
<dbReference type="GO" id="GO:0006526">
    <property type="term" value="P:L-arginine biosynthetic process"/>
    <property type="evidence" value="ECO:0007669"/>
    <property type="project" value="UniProtKB-UniRule"/>
</dbReference>
<dbReference type="CDD" id="cd23934">
    <property type="entry name" value="AGPR_1_C"/>
    <property type="match status" value="1"/>
</dbReference>
<dbReference type="CDD" id="cd17895">
    <property type="entry name" value="AGPR_1_N"/>
    <property type="match status" value="1"/>
</dbReference>
<dbReference type="FunFam" id="3.30.360.10:FF:000014">
    <property type="entry name" value="N-acetyl-gamma-glutamyl-phosphate reductase"/>
    <property type="match status" value="1"/>
</dbReference>
<dbReference type="Gene3D" id="3.30.360.10">
    <property type="entry name" value="Dihydrodipicolinate Reductase, domain 2"/>
    <property type="match status" value="1"/>
</dbReference>
<dbReference type="Gene3D" id="3.40.50.720">
    <property type="entry name" value="NAD(P)-binding Rossmann-like Domain"/>
    <property type="match status" value="1"/>
</dbReference>
<dbReference type="HAMAP" id="MF_00150">
    <property type="entry name" value="ArgC_type1"/>
    <property type="match status" value="1"/>
</dbReference>
<dbReference type="InterPro" id="IPR023013">
    <property type="entry name" value="AGPR_AS"/>
</dbReference>
<dbReference type="InterPro" id="IPR000706">
    <property type="entry name" value="AGPR_type-1"/>
</dbReference>
<dbReference type="InterPro" id="IPR036291">
    <property type="entry name" value="NAD(P)-bd_dom_sf"/>
</dbReference>
<dbReference type="InterPro" id="IPR050085">
    <property type="entry name" value="NAGSA_dehydrogenase"/>
</dbReference>
<dbReference type="InterPro" id="IPR000534">
    <property type="entry name" value="Semialdehyde_DH_NAD-bd"/>
</dbReference>
<dbReference type="NCBIfam" id="TIGR01850">
    <property type="entry name" value="argC"/>
    <property type="match status" value="1"/>
</dbReference>
<dbReference type="PANTHER" id="PTHR32338:SF10">
    <property type="entry name" value="N-ACETYL-GAMMA-GLUTAMYL-PHOSPHATE REDUCTASE, CHLOROPLASTIC-RELATED"/>
    <property type="match status" value="1"/>
</dbReference>
<dbReference type="PANTHER" id="PTHR32338">
    <property type="entry name" value="N-ACETYL-GAMMA-GLUTAMYL-PHOSPHATE REDUCTASE, CHLOROPLASTIC-RELATED-RELATED"/>
    <property type="match status" value="1"/>
</dbReference>
<dbReference type="Pfam" id="PF01118">
    <property type="entry name" value="Semialdhyde_dh"/>
    <property type="match status" value="1"/>
</dbReference>
<dbReference type="Pfam" id="PF22698">
    <property type="entry name" value="Semialdhyde_dhC_1"/>
    <property type="match status" value="1"/>
</dbReference>
<dbReference type="SMART" id="SM00859">
    <property type="entry name" value="Semialdhyde_dh"/>
    <property type="match status" value="1"/>
</dbReference>
<dbReference type="SUPFAM" id="SSF55347">
    <property type="entry name" value="Glyceraldehyde-3-phosphate dehydrogenase-like, C-terminal domain"/>
    <property type="match status" value="1"/>
</dbReference>
<dbReference type="SUPFAM" id="SSF51735">
    <property type="entry name" value="NAD(P)-binding Rossmann-fold domains"/>
    <property type="match status" value="1"/>
</dbReference>
<dbReference type="PROSITE" id="PS01224">
    <property type="entry name" value="ARGC"/>
    <property type="match status" value="1"/>
</dbReference>
<sequence length="326" mass="35107">MKNIAIIGASGYTGAQLTALVHAESELSIQGLYVSENSLDKGRALADLYPVYSHIDLALSPLTEEAKAKIVAEADAVVLATEHSVSLHLAAWFYNQGLAVFDLSGAYRFSDVAQYPKWYGFEHEYPEVLAKAVYGLAEWNAKEVAATKMIAVPGCYPTASLTALKPLKNLLTSAYPVINAVSGVTGAGRKAQLHTSFCEVSLTPYGVLGHRHQPEIATQLGQEVIFTPHLGNFKRGILATITVQLKPGTTTADVAAAYSVYDQAPLVTVKQNQFPKVDDVVLTPNCHLGWKFDENSGYLVVASAIDNLMKGAASQALQCIKIHFNL</sequence>
<name>ARGC_SHESM</name>
<keyword id="KW-0028">Amino-acid biosynthesis</keyword>
<keyword id="KW-0055">Arginine biosynthesis</keyword>
<keyword id="KW-0963">Cytoplasm</keyword>
<keyword id="KW-0521">NADP</keyword>
<keyword id="KW-0560">Oxidoreductase</keyword>
<proteinExistence type="inferred from homology"/>
<accession>Q0HDU5</accession>
<comment type="function">
    <text evidence="1">Catalyzes the NADPH-dependent reduction of N-acetyl-5-glutamyl phosphate to yield N-acetyl-L-glutamate 5-semialdehyde.</text>
</comment>
<comment type="catalytic activity">
    <reaction evidence="1">
        <text>N-acetyl-L-glutamate 5-semialdehyde + phosphate + NADP(+) = N-acetyl-L-glutamyl 5-phosphate + NADPH + H(+)</text>
        <dbReference type="Rhea" id="RHEA:21588"/>
        <dbReference type="ChEBI" id="CHEBI:15378"/>
        <dbReference type="ChEBI" id="CHEBI:29123"/>
        <dbReference type="ChEBI" id="CHEBI:43474"/>
        <dbReference type="ChEBI" id="CHEBI:57783"/>
        <dbReference type="ChEBI" id="CHEBI:57936"/>
        <dbReference type="ChEBI" id="CHEBI:58349"/>
        <dbReference type="EC" id="1.2.1.38"/>
    </reaction>
</comment>
<comment type="pathway">
    <text evidence="1">Amino-acid biosynthesis; L-arginine biosynthesis; N(2)-acetyl-L-ornithine from L-glutamate: step 3/4.</text>
</comment>
<comment type="subcellular location">
    <subcellularLocation>
        <location evidence="1">Cytoplasm</location>
    </subcellularLocation>
</comment>
<comment type="similarity">
    <text evidence="1">Belongs to the NAGSA dehydrogenase family. Type 1 subfamily.</text>
</comment>